<evidence type="ECO:0000255" key="1">
    <source>
        <dbReference type="HAMAP-Rule" id="MF_00921"/>
    </source>
</evidence>
<sequence>MEKQKKSINIYILSDSVGDTGDQVAHAAAAQFLDVEFNFARHPFIHTISLLDSILNKAVREDAMVFSTFVNPELNQYAADFCNQNTLKYLDVLTPAVNLFAEKTNLAPENKPGRTHSLNAKYFDKISAMEFAVTYDDGKDPAGFLKADIVLLGVSRTSKTPLSLYLANKGYKVANLPLVPQTQIPDEIWQVDSNKIFGLTTTKEVLNNIRRQRMIAYGLNPESSYSNMDSINKELQSADELFKKIGCLVINTANKSIEETATIIMESLV</sequence>
<keyword id="KW-0418">Kinase</keyword>
<keyword id="KW-0547">Nucleotide-binding</keyword>
<keyword id="KW-0723">Serine/threonine-protein kinase</keyword>
<keyword id="KW-0808">Transferase</keyword>
<gene>
    <name type="ordered locus">PEPE_1110</name>
</gene>
<feature type="chain" id="PRO_0000316710" description="Putative pyruvate, phosphate dikinase regulatory protein">
    <location>
        <begin position="1"/>
        <end position="269"/>
    </location>
</feature>
<feature type="binding site" evidence="1">
    <location>
        <begin position="153"/>
        <end position="160"/>
    </location>
    <ligand>
        <name>ADP</name>
        <dbReference type="ChEBI" id="CHEBI:456216"/>
    </ligand>
</feature>
<organism>
    <name type="scientific">Pediococcus pentosaceus (strain ATCC 25745 / CCUG 21536 / LMG 10740 / 183-1w)</name>
    <dbReference type="NCBI Taxonomy" id="278197"/>
    <lineage>
        <taxon>Bacteria</taxon>
        <taxon>Bacillati</taxon>
        <taxon>Bacillota</taxon>
        <taxon>Bacilli</taxon>
        <taxon>Lactobacillales</taxon>
        <taxon>Lactobacillaceae</taxon>
        <taxon>Pediococcus</taxon>
    </lineage>
</organism>
<name>PDRP_PEDPA</name>
<proteinExistence type="inferred from homology"/>
<comment type="function">
    <text evidence="1">Bifunctional serine/threonine kinase and phosphorylase involved in the regulation of the pyruvate, phosphate dikinase (PPDK) by catalyzing its phosphorylation/dephosphorylation.</text>
</comment>
<comment type="catalytic activity">
    <reaction evidence="1">
        <text>N(tele)-phospho-L-histidyl/L-threonyl-[pyruvate, phosphate dikinase] + ADP = N(tele)-phospho-L-histidyl/O-phospho-L-threonyl-[pyruvate, phosphate dikinase] + AMP + H(+)</text>
        <dbReference type="Rhea" id="RHEA:43692"/>
        <dbReference type="Rhea" id="RHEA-COMP:10650"/>
        <dbReference type="Rhea" id="RHEA-COMP:10651"/>
        <dbReference type="ChEBI" id="CHEBI:15378"/>
        <dbReference type="ChEBI" id="CHEBI:30013"/>
        <dbReference type="ChEBI" id="CHEBI:61977"/>
        <dbReference type="ChEBI" id="CHEBI:83586"/>
        <dbReference type="ChEBI" id="CHEBI:456215"/>
        <dbReference type="ChEBI" id="CHEBI:456216"/>
        <dbReference type="EC" id="2.7.11.32"/>
    </reaction>
</comment>
<comment type="catalytic activity">
    <reaction evidence="1">
        <text>N(tele)-phospho-L-histidyl/O-phospho-L-threonyl-[pyruvate, phosphate dikinase] + phosphate + H(+) = N(tele)-phospho-L-histidyl/L-threonyl-[pyruvate, phosphate dikinase] + diphosphate</text>
        <dbReference type="Rhea" id="RHEA:43696"/>
        <dbReference type="Rhea" id="RHEA-COMP:10650"/>
        <dbReference type="Rhea" id="RHEA-COMP:10651"/>
        <dbReference type="ChEBI" id="CHEBI:15378"/>
        <dbReference type="ChEBI" id="CHEBI:30013"/>
        <dbReference type="ChEBI" id="CHEBI:33019"/>
        <dbReference type="ChEBI" id="CHEBI:43474"/>
        <dbReference type="ChEBI" id="CHEBI:61977"/>
        <dbReference type="ChEBI" id="CHEBI:83586"/>
        <dbReference type="EC" id="2.7.4.27"/>
    </reaction>
</comment>
<comment type="similarity">
    <text evidence="1">Belongs to the pyruvate, phosphate/water dikinase regulatory protein family. PDRP subfamily.</text>
</comment>
<protein>
    <recommendedName>
        <fullName evidence="1">Putative pyruvate, phosphate dikinase regulatory protein</fullName>
        <shortName evidence="1">PPDK regulatory protein</shortName>
        <ecNumber evidence="1">2.7.11.32</ecNumber>
        <ecNumber evidence="1">2.7.4.27</ecNumber>
    </recommendedName>
</protein>
<dbReference type="EC" id="2.7.11.32" evidence="1"/>
<dbReference type="EC" id="2.7.4.27" evidence="1"/>
<dbReference type="EMBL" id="CP000422">
    <property type="protein sequence ID" value="ABJ68165.1"/>
    <property type="molecule type" value="Genomic_DNA"/>
</dbReference>
<dbReference type="RefSeq" id="WP_002833415.1">
    <property type="nucleotide sequence ID" value="NC_008525.1"/>
</dbReference>
<dbReference type="SMR" id="Q03F57"/>
<dbReference type="STRING" id="278197.PEPE_1110"/>
<dbReference type="GeneID" id="33062672"/>
<dbReference type="KEGG" id="ppe:PEPE_1110"/>
<dbReference type="eggNOG" id="COG1806">
    <property type="taxonomic scope" value="Bacteria"/>
</dbReference>
<dbReference type="HOGENOM" id="CLU_046206_2_1_9"/>
<dbReference type="OrthoDB" id="9782201at2"/>
<dbReference type="Proteomes" id="UP000000773">
    <property type="component" value="Chromosome"/>
</dbReference>
<dbReference type="GO" id="GO:0043531">
    <property type="term" value="F:ADP binding"/>
    <property type="evidence" value="ECO:0007669"/>
    <property type="project" value="UniProtKB-UniRule"/>
</dbReference>
<dbReference type="GO" id="GO:0005524">
    <property type="term" value="F:ATP binding"/>
    <property type="evidence" value="ECO:0007669"/>
    <property type="project" value="InterPro"/>
</dbReference>
<dbReference type="GO" id="GO:0016776">
    <property type="term" value="F:phosphotransferase activity, phosphate group as acceptor"/>
    <property type="evidence" value="ECO:0007669"/>
    <property type="project" value="UniProtKB-UniRule"/>
</dbReference>
<dbReference type="GO" id="GO:0004674">
    <property type="term" value="F:protein serine/threonine kinase activity"/>
    <property type="evidence" value="ECO:0007669"/>
    <property type="project" value="UniProtKB-UniRule"/>
</dbReference>
<dbReference type="HAMAP" id="MF_00921">
    <property type="entry name" value="PDRP"/>
    <property type="match status" value="1"/>
</dbReference>
<dbReference type="InterPro" id="IPR005177">
    <property type="entry name" value="Kinase-pyrophosphorylase"/>
</dbReference>
<dbReference type="InterPro" id="IPR026565">
    <property type="entry name" value="PPDK_reg"/>
</dbReference>
<dbReference type="NCBIfam" id="NF003742">
    <property type="entry name" value="PRK05339.1"/>
    <property type="match status" value="1"/>
</dbReference>
<dbReference type="PANTHER" id="PTHR31756">
    <property type="entry name" value="PYRUVATE, PHOSPHATE DIKINASE REGULATORY PROTEIN 1, CHLOROPLASTIC"/>
    <property type="match status" value="1"/>
</dbReference>
<dbReference type="PANTHER" id="PTHR31756:SF3">
    <property type="entry name" value="PYRUVATE, PHOSPHATE DIKINASE REGULATORY PROTEIN 1, CHLOROPLASTIC"/>
    <property type="match status" value="1"/>
</dbReference>
<dbReference type="Pfam" id="PF03618">
    <property type="entry name" value="Kinase-PPPase"/>
    <property type="match status" value="1"/>
</dbReference>
<accession>Q03F57</accession>
<reference key="1">
    <citation type="journal article" date="2006" name="Proc. Natl. Acad. Sci. U.S.A.">
        <title>Comparative genomics of the lactic acid bacteria.</title>
        <authorList>
            <person name="Makarova K.S."/>
            <person name="Slesarev A."/>
            <person name="Wolf Y.I."/>
            <person name="Sorokin A."/>
            <person name="Mirkin B."/>
            <person name="Koonin E.V."/>
            <person name="Pavlov A."/>
            <person name="Pavlova N."/>
            <person name="Karamychev V."/>
            <person name="Polouchine N."/>
            <person name="Shakhova V."/>
            <person name="Grigoriev I."/>
            <person name="Lou Y."/>
            <person name="Rohksar D."/>
            <person name="Lucas S."/>
            <person name="Huang K."/>
            <person name="Goodstein D.M."/>
            <person name="Hawkins T."/>
            <person name="Plengvidhya V."/>
            <person name="Welker D."/>
            <person name="Hughes J."/>
            <person name="Goh Y."/>
            <person name="Benson A."/>
            <person name="Baldwin K."/>
            <person name="Lee J.-H."/>
            <person name="Diaz-Muniz I."/>
            <person name="Dosti B."/>
            <person name="Smeianov V."/>
            <person name="Wechter W."/>
            <person name="Barabote R."/>
            <person name="Lorca G."/>
            <person name="Altermann E."/>
            <person name="Barrangou R."/>
            <person name="Ganesan B."/>
            <person name="Xie Y."/>
            <person name="Rawsthorne H."/>
            <person name="Tamir D."/>
            <person name="Parker C."/>
            <person name="Breidt F."/>
            <person name="Broadbent J.R."/>
            <person name="Hutkins R."/>
            <person name="O'Sullivan D."/>
            <person name="Steele J."/>
            <person name="Unlu G."/>
            <person name="Saier M.H. Jr."/>
            <person name="Klaenhammer T."/>
            <person name="Richardson P."/>
            <person name="Kozyavkin S."/>
            <person name="Weimer B.C."/>
            <person name="Mills D.A."/>
        </authorList>
    </citation>
    <scope>NUCLEOTIDE SEQUENCE [LARGE SCALE GENOMIC DNA]</scope>
    <source>
        <strain>ATCC 25745 / CCUG 21536 / LMG 10740 / 183-1w</strain>
    </source>
</reference>